<name>RS18_STRP2</name>
<organism>
    <name type="scientific">Streptococcus pneumoniae serotype 2 (strain D39 / NCTC 7466)</name>
    <dbReference type="NCBI Taxonomy" id="373153"/>
    <lineage>
        <taxon>Bacteria</taxon>
        <taxon>Bacillati</taxon>
        <taxon>Bacillota</taxon>
        <taxon>Bacilli</taxon>
        <taxon>Lactobacillales</taxon>
        <taxon>Streptococcaceae</taxon>
        <taxon>Streptococcus</taxon>
    </lineage>
</organism>
<evidence type="ECO:0000255" key="1">
    <source>
        <dbReference type="HAMAP-Rule" id="MF_00270"/>
    </source>
</evidence>
<evidence type="ECO:0000305" key="2"/>
<protein>
    <recommendedName>
        <fullName evidence="1">Small ribosomal subunit protein bS18</fullName>
    </recommendedName>
    <alternativeName>
        <fullName evidence="2">30S ribosomal protein S18</fullName>
    </alternativeName>
</protein>
<feature type="chain" id="PRO_1000003625" description="Small ribosomal subunit protein bS18">
    <location>
        <begin position="1"/>
        <end position="79"/>
    </location>
</feature>
<accession>Q04JL0</accession>
<dbReference type="EMBL" id="CP000410">
    <property type="protein sequence ID" value="ABJ55046.1"/>
    <property type="molecule type" value="Genomic_DNA"/>
</dbReference>
<dbReference type="RefSeq" id="WP_000068664.1">
    <property type="nucleotide sequence ID" value="NZ_JAMLJR010000008.1"/>
</dbReference>
<dbReference type="SMR" id="Q04JL0"/>
<dbReference type="PaxDb" id="373153-SPD_1368"/>
<dbReference type="GeneID" id="93963800"/>
<dbReference type="KEGG" id="spd:SPD_1368"/>
<dbReference type="eggNOG" id="COG0238">
    <property type="taxonomic scope" value="Bacteria"/>
</dbReference>
<dbReference type="HOGENOM" id="CLU_148710_2_2_9"/>
<dbReference type="BioCyc" id="SPNE373153:G1G6V-1474-MONOMER"/>
<dbReference type="Proteomes" id="UP000001452">
    <property type="component" value="Chromosome"/>
</dbReference>
<dbReference type="GO" id="GO:0022627">
    <property type="term" value="C:cytosolic small ribosomal subunit"/>
    <property type="evidence" value="ECO:0007669"/>
    <property type="project" value="TreeGrafter"/>
</dbReference>
<dbReference type="GO" id="GO:0070181">
    <property type="term" value="F:small ribosomal subunit rRNA binding"/>
    <property type="evidence" value="ECO:0007669"/>
    <property type="project" value="TreeGrafter"/>
</dbReference>
<dbReference type="GO" id="GO:0003735">
    <property type="term" value="F:structural constituent of ribosome"/>
    <property type="evidence" value="ECO:0007669"/>
    <property type="project" value="InterPro"/>
</dbReference>
<dbReference type="GO" id="GO:0006412">
    <property type="term" value="P:translation"/>
    <property type="evidence" value="ECO:0007669"/>
    <property type="project" value="UniProtKB-UniRule"/>
</dbReference>
<dbReference type="FunFam" id="4.10.640.10:FF:000003">
    <property type="entry name" value="30S ribosomal protein S18"/>
    <property type="match status" value="1"/>
</dbReference>
<dbReference type="Gene3D" id="4.10.640.10">
    <property type="entry name" value="Ribosomal protein S18"/>
    <property type="match status" value="1"/>
</dbReference>
<dbReference type="HAMAP" id="MF_00270">
    <property type="entry name" value="Ribosomal_bS18"/>
    <property type="match status" value="1"/>
</dbReference>
<dbReference type="InterPro" id="IPR001648">
    <property type="entry name" value="Ribosomal_bS18"/>
</dbReference>
<dbReference type="InterPro" id="IPR018275">
    <property type="entry name" value="Ribosomal_bS18_CS"/>
</dbReference>
<dbReference type="InterPro" id="IPR036870">
    <property type="entry name" value="Ribosomal_bS18_sf"/>
</dbReference>
<dbReference type="NCBIfam" id="TIGR00165">
    <property type="entry name" value="S18"/>
    <property type="match status" value="1"/>
</dbReference>
<dbReference type="PANTHER" id="PTHR13479">
    <property type="entry name" value="30S RIBOSOMAL PROTEIN S18"/>
    <property type="match status" value="1"/>
</dbReference>
<dbReference type="PANTHER" id="PTHR13479:SF40">
    <property type="entry name" value="SMALL RIBOSOMAL SUBUNIT PROTEIN BS18M"/>
    <property type="match status" value="1"/>
</dbReference>
<dbReference type="Pfam" id="PF01084">
    <property type="entry name" value="Ribosomal_S18"/>
    <property type="match status" value="1"/>
</dbReference>
<dbReference type="PRINTS" id="PR00974">
    <property type="entry name" value="RIBOSOMALS18"/>
</dbReference>
<dbReference type="SUPFAM" id="SSF46911">
    <property type="entry name" value="Ribosomal protein S18"/>
    <property type="match status" value="1"/>
</dbReference>
<dbReference type="PROSITE" id="PS00057">
    <property type="entry name" value="RIBOSOMAL_S18"/>
    <property type="match status" value="1"/>
</dbReference>
<proteinExistence type="inferred from homology"/>
<gene>
    <name evidence="1" type="primary">rpsR</name>
    <name type="ordered locus">SPD_1368</name>
</gene>
<sequence>MAQQRRGGFKRRKKVDYIAANKIEYVDYKDTELLSRFVSERGKILPRRVTGTSAKNQRKVTTAIKRARVMALMPFVNED</sequence>
<comment type="function">
    <text evidence="1">Binds as a heterodimer with protein bS6 to the central domain of the 16S rRNA, where it helps stabilize the platform of the 30S subunit.</text>
</comment>
<comment type="subunit">
    <text evidence="1">Part of the 30S ribosomal subunit. Forms a tight heterodimer with protein bS6.</text>
</comment>
<comment type="similarity">
    <text evidence="1">Belongs to the bacterial ribosomal protein bS18 family.</text>
</comment>
<keyword id="KW-1185">Reference proteome</keyword>
<keyword id="KW-0687">Ribonucleoprotein</keyword>
<keyword id="KW-0689">Ribosomal protein</keyword>
<keyword id="KW-0694">RNA-binding</keyword>
<keyword id="KW-0699">rRNA-binding</keyword>
<reference key="1">
    <citation type="journal article" date="2007" name="J. Bacteriol.">
        <title>Genome sequence of Avery's virulent serotype 2 strain D39 of Streptococcus pneumoniae and comparison with that of unencapsulated laboratory strain R6.</title>
        <authorList>
            <person name="Lanie J.A."/>
            <person name="Ng W.-L."/>
            <person name="Kazmierczak K.M."/>
            <person name="Andrzejewski T.M."/>
            <person name="Davidsen T.M."/>
            <person name="Wayne K.J."/>
            <person name="Tettelin H."/>
            <person name="Glass J.I."/>
            <person name="Winkler M.E."/>
        </authorList>
    </citation>
    <scope>NUCLEOTIDE SEQUENCE [LARGE SCALE GENOMIC DNA]</scope>
    <source>
        <strain>D39 / NCTC 7466</strain>
    </source>
</reference>